<accession>Q6DH88</accession>
<comment type="function">
    <text evidence="1">Essential for the assembly of the mitochondrial respiratory chain complex IV (CIV), also known as cytochrome c oxidase. Acts as a chaperone in the early steps of cytochrome c oxidase subunit II (MT-CO2/COX2) maturation, stabilizing the newly synthesized protein and presenting it to metallochaperones SCO1/2 which in turn facilitates the incorporation of the mature MT-CO2/COX2 into the assembling CIV holoenzyme.</text>
</comment>
<comment type="subcellular location">
    <subcellularLocation>
        <location evidence="1">Mitochondrion inner membrane</location>
        <topology evidence="2">Multi-pass membrane protein</topology>
    </subcellularLocation>
</comment>
<comment type="similarity">
    <text evidence="3">Belongs to the COX20 family.</text>
</comment>
<comment type="sequence caution" evidence="3">
    <conflict type="erroneous initiation">
        <sequence resource="EMBL-CDS" id="AAH76091"/>
    </conflict>
</comment>
<evidence type="ECO:0000250" key="1">
    <source>
        <dbReference type="UniProtKB" id="Q5RI15"/>
    </source>
</evidence>
<evidence type="ECO:0000255" key="2"/>
<evidence type="ECO:0000305" key="3"/>
<gene>
    <name type="primary">cox20</name>
    <name type="synonym">fam36a</name>
    <name type="ORF">zgc:92598</name>
</gene>
<sequence length="111" mass="12279">MTEEDGKTQGMKVLGILDIHNTPCAREAILHGAAGSVAAGLLHFLATSRVKRSFDVGVAGFMITTLGSWFYCRYNNAKLRFQQRIIQEGLKNKVFYEGTDLDPTLKKTGDK</sequence>
<dbReference type="EMBL" id="BC076091">
    <property type="protein sequence ID" value="AAH76091.1"/>
    <property type="status" value="ALT_INIT"/>
    <property type="molecule type" value="mRNA"/>
</dbReference>
<dbReference type="RefSeq" id="NP_001002712.2">
    <property type="nucleotide sequence ID" value="NM_001002712.2"/>
</dbReference>
<dbReference type="FunCoup" id="Q6DH88">
    <property type="interactions" value="592"/>
</dbReference>
<dbReference type="STRING" id="7955.ENSDARP00000136241"/>
<dbReference type="PaxDb" id="7955-ENSDARP00000018961"/>
<dbReference type="Ensembl" id="ENSDART00000170333">
    <property type="protein sequence ID" value="ENSDARP00000136241"/>
    <property type="gene ID" value="ENSDARG00000099997"/>
</dbReference>
<dbReference type="GeneID" id="436985"/>
<dbReference type="KEGG" id="dre:436985"/>
<dbReference type="AGR" id="ZFIN:ZDB-GENE-040718-467"/>
<dbReference type="CTD" id="116228"/>
<dbReference type="ZFIN" id="ZDB-GENE-040718-467">
    <property type="gene designation" value="cox20"/>
</dbReference>
<dbReference type="eggNOG" id="ENOG502S3BD">
    <property type="taxonomic scope" value="Eukaryota"/>
</dbReference>
<dbReference type="HOGENOM" id="CLU_101495_1_1_1"/>
<dbReference type="InParanoid" id="Q6DH88"/>
<dbReference type="OMA" id="VSQIPCF"/>
<dbReference type="OrthoDB" id="14603at2759"/>
<dbReference type="PhylomeDB" id="Q6DH88"/>
<dbReference type="TreeFam" id="TF323844"/>
<dbReference type="Reactome" id="R-DRE-9864848">
    <property type="pathway name" value="Complex IV assembly"/>
</dbReference>
<dbReference type="PRO" id="PR:Q6DH88"/>
<dbReference type="Proteomes" id="UP000000437">
    <property type="component" value="Chromosome 13"/>
</dbReference>
<dbReference type="Bgee" id="ENSDARG00000099997">
    <property type="expression patterns" value="Expressed in mature ovarian follicle and 22 other cell types or tissues"/>
</dbReference>
<dbReference type="ExpressionAtlas" id="Q6DH88">
    <property type="expression patterns" value="baseline"/>
</dbReference>
<dbReference type="GO" id="GO:0005743">
    <property type="term" value="C:mitochondrial inner membrane"/>
    <property type="evidence" value="ECO:0000250"/>
    <property type="project" value="UniProtKB"/>
</dbReference>
<dbReference type="GO" id="GO:0005739">
    <property type="term" value="C:mitochondrion"/>
    <property type="evidence" value="ECO:0000318"/>
    <property type="project" value="GO_Central"/>
</dbReference>
<dbReference type="GO" id="GO:0033617">
    <property type="term" value="P:mitochondrial cytochrome c oxidase assembly"/>
    <property type="evidence" value="ECO:0000250"/>
    <property type="project" value="UniProtKB"/>
</dbReference>
<dbReference type="InterPro" id="IPR022533">
    <property type="entry name" value="Cox20"/>
</dbReference>
<dbReference type="PANTHER" id="PTHR31586:SF1">
    <property type="entry name" value="CYTOCHROME C OXIDASE ASSEMBLY PROTEIN COX20, MITOCHONDRIAL"/>
    <property type="match status" value="1"/>
</dbReference>
<dbReference type="PANTHER" id="PTHR31586">
    <property type="entry name" value="CYTOCHROME C OXIDASE PROTEIN 20"/>
    <property type="match status" value="1"/>
</dbReference>
<dbReference type="Pfam" id="PF12597">
    <property type="entry name" value="Cox20"/>
    <property type="match status" value="1"/>
</dbReference>
<dbReference type="PRINTS" id="PR02049">
    <property type="entry name" value="PROTEINF36A"/>
</dbReference>
<reference key="1">
    <citation type="submission" date="2004-07" db="EMBL/GenBank/DDBJ databases">
        <authorList>
            <consortium name="NIH - Zebrafish Gene Collection (ZGC) project"/>
        </authorList>
    </citation>
    <scope>NUCLEOTIDE SEQUENCE [LARGE SCALE MRNA]</scope>
    <source>
        <tissue>Brain</tissue>
    </source>
</reference>
<proteinExistence type="inferred from homology"/>
<organism>
    <name type="scientific">Danio rerio</name>
    <name type="common">Zebrafish</name>
    <name type="synonym">Brachydanio rerio</name>
    <dbReference type="NCBI Taxonomy" id="7955"/>
    <lineage>
        <taxon>Eukaryota</taxon>
        <taxon>Metazoa</taxon>
        <taxon>Chordata</taxon>
        <taxon>Craniata</taxon>
        <taxon>Vertebrata</taxon>
        <taxon>Euteleostomi</taxon>
        <taxon>Actinopterygii</taxon>
        <taxon>Neopterygii</taxon>
        <taxon>Teleostei</taxon>
        <taxon>Ostariophysi</taxon>
        <taxon>Cypriniformes</taxon>
        <taxon>Danionidae</taxon>
        <taxon>Danioninae</taxon>
        <taxon>Danio</taxon>
    </lineage>
</organism>
<feature type="chain" id="PRO_0000360425" description="Cytochrome c oxidase assembly protein COX20, mitochondrial">
    <location>
        <begin position="1"/>
        <end position="111"/>
    </location>
</feature>
<feature type="topological domain" description="Mitochondrial intermembrane" evidence="3">
    <location>
        <begin position="1"/>
        <end position="27"/>
    </location>
</feature>
<feature type="transmembrane region" description="Helical" evidence="2">
    <location>
        <begin position="28"/>
        <end position="47"/>
    </location>
</feature>
<feature type="topological domain" description="Mitochondrial matrix" evidence="3">
    <location>
        <begin position="48"/>
        <end position="56"/>
    </location>
</feature>
<feature type="transmembrane region" description="Helical" evidence="2">
    <location>
        <begin position="57"/>
        <end position="74"/>
    </location>
</feature>
<feature type="topological domain" description="Mitochondrial intermembrane" evidence="3">
    <location>
        <begin position="75"/>
        <end position="111"/>
    </location>
</feature>
<keyword id="KW-0472">Membrane</keyword>
<keyword id="KW-0496">Mitochondrion</keyword>
<keyword id="KW-0999">Mitochondrion inner membrane</keyword>
<keyword id="KW-1185">Reference proteome</keyword>
<keyword id="KW-0812">Transmembrane</keyword>
<keyword id="KW-1133">Transmembrane helix</keyword>
<protein>
    <recommendedName>
        <fullName>Cytochrome c oxidase assembly protein COX20, mitochondrial</fullName>
    </recommendedName>
</protein>
<name>COX20_DANRE</name>